<name>RS5_METMA</name>
<sequence>MAFDQDWVPKTRLGKLVVEGQVASMDEAIKSGLPIREPQIIDMLLPDLEDEVLDINMVQRMTDSGRRVKFRATVIVGNRNGYVGLGQAKDVQVGPAIRKAIDAAKLNITYIRRGCGSWECACGLPHTVPYEVTGKAGSVSVTLIPAPRGLGIAAGNTATKVLEKAGIKDVWTKTFGTTRSTLNFAKATYDALNQVNVVRLPVYYGKEEI</sequence>
<evidence type="ECO:0000255" key="1">
    <source>
        <dbReference type="HAMAP-Rule" id="MF_01307"/>
    </source>
</evidence>
<evidence type="ECO:0000305" key="2"/>
<reference key="1">
    <citation type="journal article" date="2002" name="J. Mol. Microbiol. Biotechnol.">
        <title>The genome of Methanosarcina mazei: evidence for lateral gene transfer between Bacteria and Archaea.</title>
        <authorList>
            <person name="Deppenmeier U."/>
            <person name="Johann A."/>
            <person name="Hartsch T."/>
            <person name="Merkl R."/>
            <person name="Schmitz R.A."/>
            <person name="Martinez-Arias R."/>
            <person name="Henne A."/>
            <person name="Wiezer A."/>
            <person name="Baeumer S."/>
            <person name="Jacobi C."/>
            <person name="Brueggemann H."/>
            <person name="Lienard T."/>
            <person name="Christmann A."/>
            <person name="Boemecke M."/>
            <person name="Steckel S."/>
            <person name="Bhattacharyya A."/>
            <person name="Lykidis A."/>
            <person name="Overbeek R."/>
            <person name="Klenk H.-P."/>
            <person name="Gunsalus R.P."/>
            <person name="Fritz H.-J."/>
            <person name="Gottschalk G."/>
        </authorList>
    </citation>
    <scope>NUCLEOTIDE SEQUENCE [LARGE SCALE GENOMIC DNA]</scope>
    <source>
        <strain>ATCC BAA-159 / DSM 3647 / Goe1 / Go1 / JCM 11833 / OCM 88</strain>
    </source>
</reference>
<gene>
    <name evidence="1" type="primary">rps5</name>
    <name type="ordered locus">MM_2144</name>
</gene>
<keyword id="KW-0687">Ribonucleoprotein</keyword>
<keyword id="KW-0689">Ribosomal protein</keyword>
<keyword id="KW-0694">RNA-binding</keyword>
<keyword id="KW-0699">rRNA-binding</keyword>
<protein>
    <recommendedName>
        <fullName evidence="1">Small ribosomal subunit protein uS5</fullName>
    </recommendedName>
    <alternativeName>
        <fullName evidence="2">30S ribosomal protein S5</fullName>
    </alternativeName>
</protein>
<organism>
    <name type="scientific">Methanosarcina mazei (strain ATCC BAA-159 / DSM 3647 / Goe1 / Go1 / JCM 11833 / OCM 88)</name>
    <name type="common">Methanosarcina frisia</name>
    <dbReference type="NCBI Taxonomy" id="192952"/>
    <lineage>
        <taxon>Archaea</taxon>
        <taxon>Methanobacteriati</taxon>
        <taxon>Methanobacteriota</taxon>
        <taxon>Stenosarchaea group</taxon>
        <taxon>Methanomicrobia</taxon>
        <taxon>Methanosarcinales</taxon>
        <taxon>Methanosarcinaceae</taxon>
        <taxon>Methanosarcina</taxon>
    </lineage>
</organism>
<proteinExistence type="inferred from homology"/>
<dbReference type="EMBL" id="AE008384">
    <property type="protein sequence ID" value="AAM31840.1"/>
    <property type="molecule type" value="Genomic_DNA"/>
</dbReference>
<dbReference type="RefSeq" id="WP_011034075.1">
    <property type="nucleotide sequence ID" value="NC_003901.1"/>
</dbReference>
<dbReference type="SMR" id="Q8PV30"/>
<dbReference type="KEGG" id="mma:MM_2144"/>
<dbReference type="PATRIC" id="fig|192952.21.peg.2458"/>
<dbReference type="eggNOG" id="arCOG04087">
    <property type="taxonomic scope" value="Archaea"/>
</dbReference>
<dbReference type="HOGENOM" id="CLU_065898_0_1_2"/>
<dbReference type="Proteomes" id="UP000000595">
    <property type="component" value="Chromosome"/>
</dbReference>
<dbReference type="GO" id="GO:0022627">
    <property type="term" value="C:cytosolic small ribosomal subunit"/>
    <property type="evidence" value="ECO:0007669"/>
    <property type="project" value="TreeGrafter"/>
</dbReference>
<dbReference type="GO" id="GO:0019843">
    <property type="term" value="F:rRNA binding"/>
    <property type="evidence" value="ECO:0007669"/>
    <property type="project" value="UniProtKB-UniRule"/>
</dbReference>
<dbReference type="GO" id="GO:0003735">
    <property type="term" value="F:structural constituent of ribosome"/>
    <property type="evidence" value="ECO:0007669"/>
    <property type="project" value="InterPro"/>
</dbReference>
<dbReference type="GO" id="GO:0006412">
    <property type="term" value="P:translation"/>
    <property type="evidence" value="ECO:0007669"/>
    <property type="project" value="UniProtKB-UniRule"/>
</dbReference>
<dbReference type="FunFam" id="3.30.160.20:FF:000002">
    <property type="entry name" value="40S ribosomal protein S2"/>
    <property type="match status" value="1"/>
</dbReference>
<dbReference type="FunFam" id="3.30.230.10:FF:000004">
    <property type="entry name" value="40S ribosomal protein S2"/>
    <property type="match status" value="1"/>
</dbReference>
<dbReference type="Gene3D" id="3.30.160.20">
    <property type="match status" value="1"/>
</dbReference>
<dbReference type="Gene3D" id="3.30.230.10">
    <property type="match status" value="1"/>
</dbReference>
<dbReference type="HAMAP" id="MF_01307_A">
    <property type="entry name" value="Ribosomal_uS5_A"/>
    <property type="match status" value="1"/>
</dbReference>
<dbReference type="InterPro" id="IPR020568">
    <property type="entry name" value="Ribosomal_Su5_D2-typ_SF"/>
</dbReference>
<dbReference type="InterPro" id="IPR000851">
    <property type="entry name" value="Ribosomal_uS5"/>
</dbReference>
<dbReference type="InterPro" id="IPR047866">
    <property type="entry name" value="Ribosomal_uS5_arc"/>
</dbReference>
<dbReference type="InterPro" id="IPR005324">
    <property type="entry name" value="Ribosomal_uS5_C"/>
</dbReference>
<dbReference type="InterPro" id="IPR005711">
    <property type="entry name" value="Ribosomal_uS5_euk/arc"/>
</dbReference>
<dbReference type="InterPro" id="IPR013810">
    <property type="entry name" value="Ribosomal_uS5_N"/>
</dbReference>
<dbReference type="InterPro" id="IPR018192">
    <property type="entry name" value="Ribosomal_uS5_N_CS"/>
</dbReference>
<dbReference type="InterPro" id="IPR014721">
    <property type="entry name" value="Ribsml_uS5_D2-typ_fold_subgr"/>
</dbReference>
<dbReference type="NCBIfam" id="NF003125">
    <property type="entry name" value="PRK04044.1"/>
    <property type="match status" value="1"/>
</dbReference>
<dbReference type="NCBIfam" id="TIGR01020">
    <property type="entry name" value="uS5_euk_arch"/>
    <property type="match status" value="1"/>
</dbReference>
<dbReference type="PANTHER" id="PTHR13718:SF4">
    <property type="entry name" value="40S RIBOSOMAL PROTEIN S2"/>
    <property type="match status" value="1"/>
</dbReference>
<dbReference type="PANTHER" id="PTHR13718">
    <property type="entry name" value="RIBOSOMAL S SUBUNIT"/>
    <property type="match status" value="1"/>
</dbReference>
<dbReference type="Pfam" id="PF00333">
    <property type="entry name" value="Ribosomal_S5"/>
    <property type="match status" value="1"/>
</dbReference>
<dbReference type="Pfam" id="PF03719">
    <property type="entry name" value="Ribosomal_S5_C"/>
    <property type="match status" value="1"/>
</dbReference>
<dbReference type="SUPFAM" id="SSF54768">
    <property type="entry name" value="dsRNA-binding domain-like"/>
    <property type="match status" value="1"/>
</dbReference>
<dbReference type="SUPFAM" id="SSF54211">
    <property type="entry name" value="Ribosomal protein S5 domain 2-like"/>
    <property type="match status" value="1"/>
</dbReference>
<dbReference type="PROSITE" id="PS00585">
    <property type="entry name" value="RIBOSOMAL_S5"/>
    <property type="match status" value="1"/>
</dbReference>
<dbReference type="PROSITE" id="PS50881">
    <property type="entry name" value="S5_DSRBD"/>
    <property type="match status" value="1"/>
</dbReference>
<accession>Q8PV30</accession>
<feature type="chain" id="PRO_0000131650" description="Small ribosomal subunit protein uS5">
    <location>
        <begin position="1"/>
        <end position="209"/>
    </location>
</feature>
<feature type="domain" description="S5 DRBM" evidence="1">
    <location>
        <begin position="48"/>
        <end position="111"/>
    </location>
</feature>
<comment type="function">
    <text evidence="1">With S4 and S12 plays an important role in translational accuracy.</text>
</comment>
<comment type="subunit">
    <text evidence="1">Part of the 30S ribosomal subunit. Contacts protein S4.</text>
</comment>
<comment type="domain">
    <text>The N-terminal domain interacts with the head of the 30S subunit; the C-terminal domain interacts with the body and contacts protein S4. The interaction surface between S4 and S5 is involved in control of translational fidelity.</text>
</comment>
<comment type="similarity">
    <text evidence="1">Belongs to the universal ribosomal protein uS5 family.</text>
</comment>